<sequence>MKDLLDIMQSPTSNGNHEFDSIQITLASPDVIKSWSHGEVKKPETINYRTFKPERDGLFCAKIFGPVKDFECLCGKYKRRKFQGVICEKCGVEVTTAKVRRDRMGHIDLASPVAHIWFLKSLPSRIGLLLDMTLRDIERVLYFESYIVTEPGLTSLEKYQLLDDEDYYKALEEFGDEFTAKMGAEAVQDLLKDIDLDLEIDELREAIPQTGSETKLKKMSKRLKLLEAFRNSNNKPEWMVMNILPVLPPDLRPLVPLEGGRFATSDLNDLYRRVINRNNRLKRLLELSAPDIIVRNEKRMLQESVDALLDNGRRGRAITGSNKRPLKSLADMIKGKQGRFRQNLLGKRVDYSGRSVIVVGPTLRLHQCGLPKKMALELFKPFTYNKLLSHGLATTIKAAKKMVEREEPQVWDMLAMVIREHPVLLNRAPTLHRLGLQAFEPVLIEGKAIQLHPLVCTAFNADFDGDQMAVHVPLTLEAQLESRALMMSTNNILSPANGEPIIVPSQDVVLGLYYISRSSVNAKGEGMIFATVNEALRAIGSNDLHVNAKIKVRVTETHIDDDGNRTKETSIKDTVAGRLLIWNIMPVGMSFDECNEEMTKKNISKLINSCYRKVGVKESVMFADQLMYLGFAQATLSGVSIGIDDMVIPPLKKQIIEVAEAEVREIEDQFEQGFVTAGERYNKVVDIWSRTNDKVAKAMMDNLATDKIINAKGEEEEQKSFNSIFIMSDSGARGSAAQIRQLAGMRGLMAKPDGSIIETPIKANFREGLTVLQYFISTHGARKGLADTALKTANSGYLTRRLVDVAQDLVITSDDCGTEQGLLMKPHIQGGEIIEKLGELVLGRVTARDVTYNDDAEKILIPAGTLIDEHWVKVLDNNAIDDIWARSVITCEIEHGVCSQCYGRDLARGHKVNIGESVGVMAAQSIGEPGTQLTMRTFHVGGAASSASVDNSISVRSAGQAHFENMKTVQHTDGHLVIVSRSAEIALTDELGRERERYKVPYGSSVLIKDEEQVEGGQTIAKWDPHTHPIITEFAGTARFSEITDGLTATVKVDDATGMSSFEILATRDRSSSAKDLRPAIILNTDEGKEVIYFLPAETIIRVSDGEKVAAGSILGRVPQASSGTKDITGGLPRVADLFEARRPKDHAIMAEMSGVVSFGKETKGKNRFIITNEDGEIHEELIPKWRQINVFENETVARGEVIADGPQNPHDILRLKGQTALADYIVNEVQDVYRLQGVKINDKHIEVIIRQMLRKVEITDGGDSNHFKGDQVEYADIKALNAKLEAEDKFPVQFERQLLGITKASLATESFISAASFQETTRVLTAAAVTGKVDELRGLKENVVVGRLIPAGTGLAYHKARKEKAEQKLQDKDLNAAFDMSATTDSKDFASFDEAFAQELNQGNH</sequence>
<name>RPOC_PSYA2</name>
<dbReference type="EC" id="2.7.7.6" evidence="1"/>
<dbReference type="EMBL" id="CP000082">
    <property type="protein sequence ID" value="AAZ19734.1"/>
    <property type="molecule type" value="Genomic_DNA"/>
</dbReference>
<dbReference type="RefSeq" id="WP_011281144.1">
    <property type="nucleotide sequence ID" value="NC_007204.1"/>
</dbReference>
<dbReference type="SMR" id="Q4FQH4"/>
<dbReference type="STRING" id="259536.Psyc_1886"/>
<dbReference type="KEGG" id="par:Psyc_1886"/>
<dbReference type="eggNOG" id="COG0086">
    <property type="taxonomic scope" value="Bacteria"/>
</dbReference>
<dbReference type="HOGENOM" id="CLU_000524_3_1_6"/>
<dbReference type="OrthoDB" id="9815296at2"/>
<dbReference type="Proteomes" id="UP000000546">
    <property type="component" value="Chromosome"/>
</dbReference>
<dbReference type="GO" id="GO:0000428">
    <property type="term" value="C:DNA-directed RNA polymerase complex"/>
    <property type="evidence" value="ECO:0007669"/>
    <property type="project" value="UniProtKB-KW"/>
</dbReference>
<dbReference type="GO" id="GO:0003677">
    <property type="term" value="F:DNA binding"/>
    <property type="evidence" value="ECO:0007669"/>
    <property type="project" value="UniProtKB-UniRule"/>
</dbReference>
<dbReference type="GO" id="GO:0003899">
    <property type="term" value="F:DNA-directed RNA polymerase activity"/>
    <property type="evidence" value="ECO:0007669"/>
    <property type="project" value="UniProtKB-UniRule"/>
</dbReference>
<dbReference type="GO" id="GO:0000287">
    <property type="term" value="F:magnesium ion binding"/>
    <property type="evidence" value="ECO:0007669"/>
    <property type="project" value="UniProtKB-UniRule"/>
</dbReference>
<dbReference type="GO" id="GO:0008270">
    <property type="term" value="F:zinc ion binding"/>
    <property type="evidence" value="ECO:0007669"/>
    <property type="project" value="UniProtKB-UniRule"/>
</dbReference>
<dbReference type="GO" id="GO:0006351">
    <property type="term" value="P:DNA-templated transcription"/>
    <property type="evidence" value="ECO:0007669"/>
    <property type="project" value="UniProtKB-UniRule"/>
</dbReference>
<dbReference type="CDD" id="cd02655">
    <property type="entry name" value="RNAP_beta'_C"/>
    <property type="match status" value="1"/>
</dbReference>
<dbReference type="CDD" id="cd01609">
    <property type="entry name" value="RNAP_beta'_N"/>
    <property type="match status" value="1"/>
</dbReference>
<dbReference type="FunFam" id="1.10.132.30:FF:000003">
    <property type="entry name" value="DNA-directed RNA polymerase subunit beta"/>
    <property type="match status" value="1"/>
</dbReference>
<dbReference type="FunFam" id="1.10.150.390:FF:000002">
    <property type="entry name" value="DNA-directed RNA polymerase subunit beta"/>
    <property type="match status" value="1"/>
</dbReference>
<dbReference type="Gene3D" id="1.10.132.30">
    <property type="match status" value="1"/>
</dbReference>
<dbReference type="Gene3D" id="1.10.150.390">
    <property type="match status" value="1"/>
</dbReference>
<dbReference type="Gene3D" id="1.10.1790.20">
    <property type="match status" value="1"/>
</dbReference>
<dbReference type="Gene3D" id="1.10.40.90">
    <property type="match status" value="1"/>
</dbReference>
<dbReference type="Gene3D" id="2.40.40.20">
    <property type="match status" value="1"/>
</dbReference>
<dbReference type="Gene3D" id="2.40.50.100">
    <property type="match status" value="3"/>
</dbReference>
<dbReference type="Gene3D" id="4.10.860.120">
    <property type="entry name" value="RNA polymerase II, clamp domain"/>
    <property type="match status" value="1"/>
</dbReference>
<dbReference type="Gene3D" id="1.10.274.100">
    <property type="entry name" value="RNA polymerase Rpb1, domain 3"/>
    <property type="match status" value="1"/>
</dbReference>
<dbReference type="HAMAP" id="MF_01322">
    <property type="entry name" value="RNApol_bact_RpoC"/>
    <property type="match status" value="1"/>
</dbReference>
<dbReference type="InterPro" id="IPR045867">
    <property type="entry name" value="DNA-dir_RpoC_beta_prime"/>
</dbReference>
<dbReference type="InterPro" id="IPR012754">
    <property type="entry name" value="DNA-dir_RpoC_beta_prime_bact"/>
</dbReference>
<dbReference type="InterPro" id="IPR000722">
    <property type="entry name" value="RNA_pol_asu"/>
</dbReference>
<dbReference type="InterPro" id="IPR006592">
    <property type="entry name" value="RNA_pol_N"/>
</dbReference>
<dbReference type="InterPro" id="IPR007080">
    <property type="entry name" value="RNA_pol_Rpb1_1"/>
</dbReference>
<dbReference type="InterPro" id="IPR007066">
    <property type="entry name" value="RNA_pol_Rpb1_3"/>
</dbReference>
<dbReference type="InterPro" id="IPR042102">
    <property type="entry name" value="RNA_pol_Rpb1_3_sf"/>
</dbReference>
<dbReference type="InterPro" id="IPR007083">
    <property type="entry name" value="RNA_pol_Rpb1_4"/>
</dbReference>
<dbReference type="InterPro" id="IPR007081">
    <property type="entry name" value="RNA_pol_Rpb1_5"/>
</dbReference>
<dbReference type="InterPro" id="IPR044893">
    <property type="entry name" value="RNA_pol_Rpb1_clamp_domain"/>
</dbReference>
<dbReference type="InterPro" id="IPR038120">
    <property type="entry name" value="Rpb1_funnel_sf"/>
</dbReference>
<dbReference type="NCBIfam" id="TIGR02386">
    <property type="entry name" value="rpoC_TIGR"/>
    <property type="match status" value="1"/>
</dbReference>
<dbReference type="PANTHER" id="PTHR19376">
    <property type="entry name" value="DNA-DIRECTED RNA POLYMERASE"/>
    <property type="match status" value="1"/>
</dbReference>
<dbReference type="PANTHER" id="PTHR19376:SF54">
    <property type="entry name" value="DNA-DIRECTED RNA POLYMERASE SUBUNIT BETA"/>
    <property type="match status" value="1"/>
</dbReference>
<dbReference type="Pfam" id="PF04997">
    <property type="entry name" value="RNA_pol_Rpb1_1"/>
    <property type="match status" value="1"/>
</dbReference>
<dbReference type="Pfam" id="PF00623">
    <property type="entry name" value="RNA_pol_Rpb1_2"/>
    <property type="match status" value="1"/>
</dbReference>
<dbReference type="Pfam" id="PF04983">
    <property type="entry name" value="RNA_pol_Rpb1_3"/>
    <property type="match status" value="1"/>
</dbReference>
<dbReference type="Pfam" id="PF05000">
    <property type="entry name" value="RNA_pol_Rpb1_4"/>
    <property type="match status" value="1"/>
</dbReference>
<dbReference type="Pfam" id="PF04998">
    <property type="entry name" value="RNA_pol_Rpb1_5"/>
    <property type="match status" value="1"/>
</dbReference>
<dbReference type="SMART" id="SM00663">
    <property type="entry name" value="RPOLA_N"/>
    <property type="match status" value="1"/>
</dbReference>
<dbReference type="SUPFAM" id="SSF64484">
    <property type="entry name" value="beta and beta-prime subunits of DNA dependent RNA-polymerase"/>
    <property type="match status" value="1"/>
</dbReference>
<protein>
    <recommendedName>
        <fullName evidence="1">DNA-directed RNA polymerase subunit beta'</fullName>
        <shortName evidence="1">RNAP subunit beta'</shortName>
        <ecNumber evidence="1">2.7.7.6</ecNumber>
    </recommendedName>
    <alternativeName>
        <fullName evidence="1">RNA polymerase subunit beta'</fullName>
    </alternativeName>
    <alternativeName>
        <fullName evidence="1">Transcriptase subunit beta'</fullName>
    </alternativeName>
</protein>
<comment type="function">
    <text evidence="1">DNA-dependent RNA polymerase catalyzes the transcription of DNA into RNA using the four ribonucleoside triphosphates as substrates.</text>
</comment>
<comment type="catalytic activity">
    <reaction evidence="1">
        <text>RNA(n) + a ribonucleoside 5'-triphosphate = RNA(n+1) + diphosphate</text>
        <dbReference type="Rhea" id="RHEA:21248"/>
        <dbReference type="Rhea" id="RHEA-COMP:14527"/>
        <dbReference type="Rhea" id="RHEA-COMP:17342"/>
        <dbReference type="ChEBI" id="CHEBI:33019"/>
        <dbReference type="ChEBI" id="CHEBI:61557"/>
        <dbReference type="ChEBI" id="CHEBI:140395"/>
        <dbReference type="EC" id="2.7.7.6"/>
    </reaction>
</comment>
<comment type="cofactor">
    <cofactor evidence="1">
        <name>Mg(2+)</name>
        <dbReference type="ChEBI" id="CHEBI:18420"/>
    </cofactor>
    <text evidence="1">Binds 1 Mg(2+) ion per subunit.</text>
</comment>
<comment type="cofactor">
    <cofactor evidence="1">
        <name>Zn(2+)</name>
        <dbReference type="ChEBI" id="CHEBI:29105"/>
    </cofactor>
    <text evidence="1">Binds 2 Zn(2+) ions per subunit.</text>
</comment>
<comment type="subunit">
    <text evidence="1">The RNAP catalytic core consists of 2 alpha, 1 beta, 1 beta' and 1 omega subunit. When a sigma factor is associated with the core the holoenzyme is formed, which can initiate transcription.</text>
</comment>
<comment type="similarity">
    <text evidence="1">Belongs to the RNA polymerase beta' chain family.</text>
</comment>
<evidence type="ECO:0000255" key="1">
    <source>
        <dbReference type="HAMAP-Rule" id="MF_01322"/>
    </source>
</evidence>
<feature type="chain" id="PRO_0000225569" description="DNA-directed RNA polymerase subunit beta'">
    <location>
        <begin position="1"/>
        <end position="1406"/>
    </location>
</feature>
<feature type="binding site" evidence="1">
    <location>
        <position position="72"/>
    </location>
    <ligand>
        <name>Zn(2+)</name>
        <dbReference type="ChEBI" id="CHEBI:29105"/>
        <label>1</label>
    </ligand>
</feature>
<feature type="binding site" evidence="1">
    <location>
        <position position="74"/>
    </location>
    <ligand>
        <name>Zn(2+)</name>
        <dbReference type="ChEBI" id="CHEBI:29105"/>
        <label>1</label>
    </ligand>
</feature>
<feature type="binding site" evidence="1">
    <location>
        <position position="87"/>
    </location>
    <ligand>
        <name>Zn(2+)</name>
        <dbReference type="ChEBI" id="CHEBI:29105"/>
        <label>1</label>
    </ligand>
</feature>
<feature type="binding site" evidence="1">
    <location>
        <position position="90"/>
    </location>
    <ligand>
        <name>Zn(2+)</name>
        <dbReference type="ChEBI" id="CHEBI:29105"/>
        <label>1</label>
    </ligand>
</feature>
<feature type="binding site" evidence="1">
    <location>
        <position position="462"/>
    </location>
    <ligand>
        <name>Mg(2+)</name>
        <dbReference type="ChEBI" id="CHEBI:18420"/>
    </ligand>
</feature>
<feature type="binding site" evidence="1">
    <location>
        <position position="464"/>
    </location>
    <ligand>
        <name>Mg(2+)</name>
        <dbReference type="ChEBI" id="CHEBI:18420"/>
    </ligand>
</feature>
<feature type="binding site" evidence="1">
    <location>
        <position position="466"/>
    </location>
    <ligand>
        <name>Mg(2+)</name>
        <dbReference type="ChEBI" id="CHEBI:18420"/>
    </ligand>
</feature>
<feature type="binding site" evidence="1">
    <location>
        <position position="816"/>
    </location>
    <ligand>
        <name>Zn(2+)</name>
        <dbReference type="ChEBI" id="CHEBI:29105"/>
        <label>2</label>
    </ligand>
</feature>
<feature type="binding site" evidence="1">
    <location>
        <position position="891"/>
    </location>
    <ligand>
        <name>Zn(2+)</name>
        <dbReference type="ChEBI" id="CHEBI:29105"/>
        <label>2</label>
    </ligand>
</feature>
<feature type="binding site" evidence="1">
    <location>
        <position position="898"/>
    </location>
    <ligand>
        <name>Zn(2+)</name>
        <dbReference type="ChEBI" id="CHEBI:29105"/>
        <label>2</label>
    </ligand>
</feature>
<feature type="binding site" evidence="1">
    <location>
        <position position="901"/>
    </location>
    <ligand>
        <name>Zn(2+)</name>
        <dbReference type="ChEBI" id="CHEBI:29105"/>
        <label>2</label>
    </ligand>
</feature>
<reference key="1">
    <citation type="journal article" date="2010" name="Appl. Environ. Microbiol.">
        <title>The genome sequence of Psychrobacter arcticus 273-4, a psychroactive Siberian permafrost bacterium, reveals mechanisms for adaptation to low-temperature growth.</title>
        <authorList>
            <person name="Ayala-del-Rio H.L."/>
            <person name="Chain P.S."/>
            <person name="Grzymski J.J."/>
            <person name="Ponder M.A."/>
            <person name="Ivanova N."/>
            <person name="Bergholz P.W."/>
            <person name="Di Bartolo G."/>
            <person name="Hauser L."/>
            <person name="Land M."/>
            <person name="Bakermans C."/>
            <person name="Rodrigues D."/>
            <person name="Klappenbach J."/>
            <person name="Zarka D."/>
            <person name="Larimer F."/>
            <person name="Richardson P."/>
            <person name="Murray A."/>
            <person name="Thomashow M."/>
            <person name="Tiedje J.M."/>
        </authorList>
    </citation>
    <scope>NUCLEOTIDE SEQUENCE [LARGE SCALE GENOMIC DNA]</scope>
    <source>
        <strain>DSM 17307 / VKM B-2377 / 273-4</strain>
    </source>
</reference>
<proteinExistence type="inferred from homology"/>
<gene>
    <name evidence="1" type="primary">rpoC</name>
    <name type="ordered locus">Psyc_1886</name>
</gene>
<accession>Q4FQH4</accession>
<organism>
    <name type="scientific">Psychrobacter arcticus (strain DSM 17307 / VKM B-2377 / 273-4)</name>
    <dbReference type="NCBI Taxonomy" id="259536"/>
    <lineage>
        <taxon>Bacteria</taxon>
        <taxon>Pseudomonadati</taxon>
        <taxon>Pseudomonadota</taxon>
        <taxon>Gammaproteobacteria</taxon>
        <taxon>Moraxellales</taxon>
        <taxon>Moraxellaceae</taxon>
        <taxon>Psychrobacter</taxon>
    </lineage>
</organism>
<keyword id="KW-0240">DNA-directed RNA polymerase</keyword>
<keyword id="KW-0460">Magnesium</keyword>
<keyword id="KW-0479">Metal-binding</keyword>
<keyword id="KW-0548">Nucleotidyltransferase</keyword>
<keyword id="KW-1185">Reference proteome</keyword>
<keyword id="KW-0804">Transcription</keyword>
<keyword id="KW-0808">Transferase</keyword>
<keyword id="KW-0862">Zinc</keyword>